<comment type="function">
    <text evidence="1">Sequence-specific transcription factor which is part of a developmental regulatory system that provides cells with specific positional identities on the anterior-posterior axis.</text>
</comment>
<comment type="subcellular location">
    <subcellularLocation>
        <location evidence="2">Nucleus</location>
    </subcellularLocation>
</comment>
<comment type="similarity">
    <text evidence="4">Belongs to the Antp homeobox family.</text>
</comment>
<organism>
    <name type="scientific">Heterodontus francisci</name>
    <name type="common">Horn shark</name>
    <name type="synonym">Cestracion francisci</name>
    <dbReference type="NCBI Taxonomy" id="7792"/>
    <lineage>
        <taxon>Eukaryota</taxon>
        <taxon>Metazoa</taxon>
        <taxon>Chordata</taxon>
        <taxon>Craniata</taxon>
        <taxon>Vertebrata</taxon>
        <taxon>Chondrichthyes</taxon>
        <taxon>Elasmobranchii</taxon>
        <taxon>Galeomorphii</taxon>
        <taxon>Heterodontoidea</taxon>
        <taxon>Heterodontiformes</taxon>
        <taxon>Heterodontidae</taxon>
        <taxon>Heterodontus</taxon>
    </lineage>
</organism>
<gene>
    <name type="primary">HOXD8</name>
</gene>
<reference key="1">
    <citation type="journal article" date="2000" name="Proc. Natl. Acad. Sci. U.S.A.">
        <title>Hox cluster genomics in the horn shark, Heterodontus francisci.</title>
        <authorList>
            <person name="Kim C.B."/>
            <person name="Amemiya C."/>
            <person name="Bailey W."/>
            <person name="Kawasaki K."/>
            <person name="Mezey J."/>
            <person name="Miller W."/>
            <person name="Minoshima S."/>
            <person name="Shimizu N."/>
            <person name="Wagner G."/>
            <person name="Ruddle F."/>
        </authorList>
    </citation>
    <scope>NUCLEOTIDE SEQUENCE [GENOMIC DNA]</scope>
</reference>
<dbReference type="EMBL" id="AF224263">
    <property type="protein sequence ID" value="AAF44632.1"/>
    <property type="molecule type" value="Genomic_DNA"/>
</dbReference>
<dbReference type="SMR" id="Q9IA12"/>
<dbReference type="GO" id="GO:0005634">
    <property type="term" value="C:nucleus"/>
    <property type="evidence" value="ECO:0007669"/>
    <property type="project" value="UniProtKB-SubCell"/>
</dbReference>
<dbReference type="GO" id="GO:0000981">
    <property type="term" value="F:DNA-binding transcription factor activity, RNA polymerase II-specific"/>
    <property type="evidence" value="ECO:0007669"/>
    <property type="project" value="InterPro"/>
</dbReference>
<dbReference type="GO" id="GO:0000977">
    <property type="term" value="F:RNA polymerase II transcription regulatory region sequence-specific DNA binding"/>
    <property type="evidence" value="ECO:0007669"/>
    <property type="project" value="TreeGrafter"/>
</dbReference>
<dbReference type="CDD" id="cd00086">
    <property type="entry name" value="homeodomain"/>
    <property type="match status" value="1"/>
</dbReference>
<dbReference type="FunFam" id="1.10.10.60:FF:000072">
    <property type="entry name" value="Homeobox protein Hox-B8"/>
    <property type="match status" value="1"/>
</dbReference>
<dbReference type="Gene3D" id="1.10.10.60">
    <property type="entry name" value="Homeodomain-like"/>
    <property type="match status" value="1"/>
</dbReference>
<dbReference type="InterPro" id="IPR050948">
    <property type="entry name" value="Antp_homeobox_TF"/>
</dbReference>
<dbReference type="InterPro" id="IPR001356">
    <property type="entry name" value="HD"/>
</dbReference>
<dbReference type="InterPro" id="IPR020479">
    <property type="entry name" value="HD_metazoa"/>
</dbReference>
<dbReference type="InterPro" id="IPR001827">
    <property type="entry name" value="Homeobox_Antennapedia_CS"/>
</dbReference>
<dbReference type="InterPro" id="IPR017970">
    <property type="entry name" value="Homeobox_CS"/>
</dbReference>
<dbReference type="InterPro" id="IPR009057">
    <property type="entry name" value="Homeodomain-like_sf"/>
</dbReference>
<dbReference type="InterPro" id="IPR000047">
    <property type="entry name" value="HTH_motif"/>
</dbReference>
<dbReference type="PANTHER" id="PTHR46166">
    <property type="entry name" value="HOMEOBOX DOMAIN-CONTAINING PROTEIN"/>
    <property type="match status" value="1"/>
</dbReference>
<dbReference type="PANTHER" id="PTHR46166:SF1">
    <property type="entry name" value="HOMEOBOX PROTEIN HOX-D8"/>
    <property type="match status" value="1"/>
</dbReference>
<dbReference type="Pfam" id="PF00046">
    <property type="entry name" value="Homeodomain"/>
    <property type="match status" value="1"/>
</dbReference>
<dbReference type="PRINTS" id="PR00024">
    <property type="entry name" value="HOMEOBOX"/>
</dbReference>
<dbReference type="PRINTS" id="PR00031">
    <property type="entry name" value="HTHREPRESSR"/>
</dbReference>
<dbReference type="SMART" id="SM00389">
    <property type="entry name" value="HOX"/>
    <property type="match status" value="1"/>
</dbReference>
<dbReference type="SUPFAM" id="SSF46689">
    <property type="entry name" value="Homeodomain-like"/>
    <property type="match status" value="1"/>
</dbReference>
<dbReference type="PROSITE" id="PS00032">
    <property type="entry name" value="ANTENNAPEDIA"/>
    <property type="match status" value="1"/>
</dbReference>
<dbReference type="PROSITE" id="PS00027">
    <property type="entry name" value="HOMEOBOX_1"/>
    <property type="match status" value="1"/>
</dbReference>
<dbReference type="PROSITE" id="PS50071">
    <property type="entry name" value="HOMEOBOX_2"/>
    <property type="match status" value="1"/>
</dbReference>
<proteinExistence type="inferred from homology"/>
<evidence type="ECO:0000250" key="1"/>
<evidence type="ECO:0000255" key="2">
    <source>
        <dbReference type="PROSITE-ProRule" id="PRU00108"/>
    </source>
</evidence>
<evidence type="ECO:0000256" key="3">
    <source>
        <dbReference type="SAM" id="MobiDB-lite"/>
    </source>
</evidence>
<evidence type="ECO:0000305" key="4"/>
<protein>
    <recommendedName>
        <fullName>Homeobox protein Hox-D8</fullName>
    </recommendedName>
</protein>
<name>HXD8_HETFR</name>
<accession>Q9IA12</accession>
<sequence length="240" mass="28127">MSSYFVNPFYSKYKPGEALSPTYYDCRFPQDVTSRHAVVYGPSSGASFQHPAQVQDFYHHGTSALPNTGFQQNPCGITCHGDPSKFYGYDNLQRQQIFTTQQEADLVQYPDCKSSSSNIGEEPEHLNQNSSPTQMFPWMRPQAAPGRRRGRQTYSRFQTLELEKEFLFNPYLTRKRRIEVSHALGLTERQVKIWFQNRRMKWKKENNKDKFPTSRNDDEDEEVKKEQEEPEQETTEKETK</sequence>
<feature type="chain" id="PRO_0000200219" description="Homeobox protein Hox-D8">
    <location>
        <begin position="1"/>
        <end position="240"/>
    </location>
</feature>
<feature type="DNA-binding region" description="Homeobox" evidence="2">
    <location>
        <begin position="147"/>
        <end position="206"/>
    </location>
</feature>
<feature type="region of interest" description="Disordered" evidence="3">
    <location>
        <begin position="112"/>
        <end position="136"/>
    </location>
</feature>
<feature type="region of interest" description="Disordered" evidence="3">
    <location>
        <begin position="204"/>
        <end position="240"/>
    </location>
</feature>
<feature type="short sequence motif" description="Antp-type hexapeptide">
    <location>
        <begin position="135"/>
        <end position="140"/>
    </location>
</feature>
<feature type="compositionally biased region" description="Basic and acidic residues" evidence="3">
    <location>
        <begin position="204"/>
        <end position="227"/>
    </location>
</feature>
<keyword id="KW-0217">Developmental protein</keyword>
<keyword id="KW-0238">DNA-binding</keyword>
<keyword id="KW-0371">Homeobox</keyword>
<keyword id="KW-0539">Nucleus</keyword>
<keyword id="KW-0804">Transcription</keyword>
<keyword id="KW-0805">Transcription regulation</keyword>